<comment type="function">
    <text evidence="4">Transaminase involved in tyrosine breakdown. Converts tyrosine to p-hydroxyphenylpyruvate. Can catalyze the reverse reaction, using glutamic acid, with 2-oxoglutarate as cosubstrate (in vitro). Has much lower affinity and transaminase activity for phenylalanine.</text>
</comment>
<comment type="catalytic activity">
    <reaction evidence="4">
        <text>L-tyrosine + 2-oxoglutarate = 3-(4-hydroxyphenyl)pyruvate + L-glutamate</text>
        <dbReference type="Rhea" id="RHEA:15093"/>
        <dbReference type="ChEBI" id="CHEBI:16810"/>
        <dbReference type="ChEBI" id="CHEBI:29985"/>
        <dbReference type="ChEBI" id="CHEBI:36242"/>
        <dbReference type="ChEBI" id="CHEBI:58315"/>
        <dbReference type="EC" id="2.6.1.5"/>
    </reaction>
</comment>
<comment type="cofactor">
    <cofactor evidence="4">
        <name>pyridoxal 5'-phosphate</name>
        <dbReference type="ChEBI" id="CHEBI:597326"/>
    </cofactor>
</comment>
<comment type="biophysicochemical properties">
    <kinetics>
        <KM evidence="4">1.8 mM for tyrosine</KM>
        <KM evidence="4">4.9 mM for glutamate</KM>
        <KM evidence="4">11.4 mM for phenylalanine</KM>
        <KM evidence="4">1.8 mM for 2-oxoglutarate</KM>
        <KM evidence="4">0.7 mM for p-hydroxyphenylpyruvate</KM>
    </kinetics>
    <phDependence>
        <text evidence="4">Optimum pH is 7.</text>
    </phDependence>
    <temperatureDependence>
        <text evidence="4">Optimum temperature is 55-70 degrees Celsius.</text>
    </temperatureDependence>
</comment>
<comment type="pathway">
    <text>Amino-acid degradation; L-phenylalanine degradation; acetoacetate and fumarate from L-phenylalanine: step 2/6.</text>
</comment>
<comment type="subunit">
    <text evidence="1">Homodimer.</text>
</comment>
<comment type="similarity">
    <text evidence="5">Belongs to the class-I pyridoxal-phosphate-dependent aminotransferase family.</text>
</comment>
<name>ATTY_MOUSE</name>
<evidence type="ECO:0000250" key="1"/>
<evidence type="ECO:0000250" key="2">
    <source>
        <dbReference type="UniProtKB" id="P04694"/>
    </source>
</evidence>
<evidence type="ECO:0000250" key="3">
    <source>
        <dbReference type="UniProtKB" id="P17735"/>
    </source>
</evidence>
<evidence type="ECO:0000269" key="4">
    <source>
    </source>
</evidence>
<evidence type="ECO:0000305" key="5"/>
<evidence type="ECO:0007829" key="6">
    <source>
        <dbReference type="PDB" id="3PDX"/>
    </source>
</evidence>
<accession>Q8QZR1</accession>
<accession>Q3UER7</accession>
<accession>Q8BTI1</accession>
<reference key="1">
    <citation type="journal article" date="2005" name="Science">
        <title>The transcriptional landscape of the mammalian genome.</title>
        <authorList>
            <person name="Carninci P."/>
            <person name="Kasukawa T."/>
            <person name="Katayama S."/>
            <person name="Gough J."/>
            <person name="Frith M.C."/>
            <person name="Maeda N."/>
            <person name="Oyama R."/>
            <person name="Ravasi T."/>
            <person name="Lenhard B."/>
            <person name="Wells C."/>
            <person name="Kodzius R."/>
            <person name="Shimokawa K."/>
            <person name="Bajic V.B."/>
            <person name="Brenner S.E."/>
            <person name="Batalov S."/>
            <person name="Forrest A.R."/>
            <person name="Zavolan M."/>
            <person name="Davis M.J."/>
            <person name="Wilming L.G."/>
            <person name="Aidinis V."/>
            <person name="Allen J.E."/>
            <person name="Ambesi-Impiombato A."/>
            <person name="Apweiler R."/>
            <person name="Aturaliya R.N."/>
            <person name="Bailey T.L."/>
            <person name="Bansal M."/>
            <person name="Baxter L."/>
            <person name="Beisel K.W."/>
            <person name="Bersano T."/>
            <person name="Bono H."/>
            <person name="Chalk A.M."/>
            <person name="Chiu K.P."/>
            <person name="Choudhary V."/>
            <person name="Christoffels A."/>
            <person name="Clutterbuck D.R."/>
            <person name="Crowe M.L."/>
            <person name="Dalla E."/>
            <person name="Dalrymple B.P."/>
            <person name="de Bono B."/>
            <person name="Della Gatta G."/>
            <person name="di Bernardo D."/>
            <person name="Down T."/>
            <person name="Engstrom P."/>
            <person name="Fagiolini M."/>
            <person name="Faulkner G."/>
            <person name="Fletcher C.F."/>
            <person name="Fukushima T."/>
            <person name="Furuno M."/>
            <person name="Futaki S."/>
            <person name="Gariboldi M."/>
            <person name="Georgii-Hemming P."/>
            <person name="Gingeras T.R."/>
            <person name="Gojobori T."/>
            <person name="Green R.E."/>
            <person name="Gustincich S."/>
            <person name="Harbers M."/>
            <person name="Hayashi Y."/>
            <person name="Hensch T.K."/>
            <person name="Hirokawa N."/>
            <person name="Hill D."/>
            <person name="Huminiecki L."/>
            <person name="Iacono M."/>
            <person name="Ikeo K."/>
            <person name="Iwama A."/>
            <person name="Ishikawa T."/>
            <person name="Jakt M."/>
            <person name="Kanapin A."/>
            <person name="Katoh M."/>
            <person name="Kawasawa Y."/>
            <person name="Kelso J."/>
            <person name="Kitamura H."/>
            <person name="Kitano H."/>
            <person name="Kollias G."/>
            <person name="Krishnan S.P."/>
            <person name="Kruger A."/>
            <person name="Kummerfeld S.K."/>
            <person name="Kurochkin I.V."/>
            <person name="Lareau L.F."/>
            <person name="Lazarevic D."/>
            <person name="Lipovich L."/>
            <person name="Liu J."/>
            <person name="Liuni S."/>
            <person name="McWilliam S."/>
            <person name="Madan Babu M."/>
            <person name="Madera M."/>
            <person name="Marchionni L."/>
            <person name="Matsuda H."/>
            <person name="Matsuzawa S."/>
            <person name="Miki H."/>
            <person name="Mignone F."/>
            <person name="Miyake S."/>
            <person name="Morris K."/>
            <person name="Mottagui-Tabar S."/>
            <person name="Mulder N."/>
            <person name="Nakano N."/>
            <person name="Nakauchi H."/>
            <person name="Ng P."/>
            <person name="Nilsson R."/>
            <person name="Nishiguchi S."/>
            <person name="Nishikawa S."/>
            <person name="Nori F."/>
            <person name="Ohara O."/>
            <person name="Okazaki Y."/>
            <person name="Orlando V."/>
            <person name="Pang K.C."/>
            <person name="Pavan W.J."/>
            <person name="Pavesi G."/>
            <person name="Pesole G."/>
            <person name="Petrovsky N."/>
            <person name="Piazza S."/>
            <person name="Reed J."/>
            <person name="Reid J.F."/>
            <person name="Ring B.Z."/>
            <person name="Ringwald M."/>
            <person name="Rost B."/>
            <person name="Ruan Y."/>
            <person name="Salzberg S.L."/>
            <person name="Sandelin A."/>
            <person name="Schneider C."/>
            <person name="Schoenbach C."/>
            <person name="Sekiguchi K."/>
            <person name="Semple C.A."/>
            <person name="Seno S."/>
            <person name="Sessa L."/>
            <person name="Sheng Y."/>
            <person name="Shibata Y."/>
            <person name="Shimada H."/>
            <person name="Shimada K."/>
            <person name="Silva D."/>
            <person name="Sinclair B."/>
            <person name="Sperling S."/>
            <person name="Stupka E."/>
            <person name="Sugiura K."/>
            <person name="Sultana R."/>
            <person name="Takenaka Y."/>
            <person name="Taki K."/>
            <person name="Tammoja K."/>
            <person name="Tan S.L."/>
            <person name="Tang S."/>
            <person name="Taylor M.S."/>
            <person name="Tegner J."/>
            <person name="Teichmann S.A."/>
            <person name="Ueda H.R."/>
            <person name="van Nimwegen E."/>
            <person name="Verardo R."/>
            <person name="Wei C.L."/>
            <person name="Yagi K."/>
            <person name="Yamanishi H."/>
            <person name="Zabarovsky E."/>
            <person name="Zhu S."/>
            <person name="Zimmer A."/>
            <person name="Hide W."/>
            <person name="Bult C."/>
            <person name="Grimmond S.M."/>
            <person name="Teasdale R.D."/>
            <person name="Liu E.T."/>
            <person name="Brusic V."/>
            <person name="Quackenbush J."/>
            <person name="Wahlestedt C."/>
            <person name="Mattick J.S."/>
            <person name="Hume D.A."/>
            <person name="Kai C."/>
            <person name="Sasaki D."/>
            <person name="Tomaru Y."/>
            <person name="Fukuda S."/>
            <person name="Kanamori-Katayama M."/>
            <person name="Suzuki M."/>
            <person name="Aoki J."/>
            <person name="Arakawa T."/>
            <person name="Iida J."/>
            <person name="Imamura K."/>
            <person name="Itoh M."/>
            <person name="Kato T."/>
            <person name="Kawaji H."/>
            <person name="Kawagashira N."/>
            <person name="Kawashima T."/>
            <person name="Kojima M."/>
            <person name="Kondo S."/>
            <person name="Konno H."/>
            <person name="Nakano K."/>
            <person name="Ninomiya N."/>
            <person name="Nishio T."/>
            <person name="Okada M."/>
            <person name="Plessy C."/>
            <person name="Shibata K."/>
            <person name="Shiraki T."/>
            <person name="Suzuki S."/>
            <person name="Tagami M."/>
            <person name="Waki K."/>
            <person name="Watahiki A."/>
            <person name="Okamura-Oho Y."/>
            <person name="Suzuki H."/>
            <person name="Kawai J."/>
            <person name="Hayashizaki Y."/>
        </authorList>
    </citation>
    <scope>NUCLEOTIDE SEQUENCE [LARGE SCALE MRNA]</scope>
    <source>
        <strain>C57BL/6J</strain>
        <tissue>Liver</tissue>
    </source>
</reference>
<reference key="2">
    <citation type="journal article" date="2004" name="Genome Res.">
        <title>The status, quality, and expansion of the NIH full-length cDNA project: the Mammalian Gene Collection (MGC).</title>
        <authorList>
            <consortium name="The MGC Project Team"/>
        </authorList>
    </citation>
    <scope>NUCLEOTIDE SEQUENCE [LARGE SCALE MRNA]</scope>
    <source>
        <strain>FVB/N</strain>
        <tissue>Liver</tissue>
    </source>
</reference>
<reference key="3">
    <citation type="journal article" date="2010" name="Cell">
        <title>A tissue-specific atlas of mouse protein phosphorylation and expression.</title>
        <authorList>
            <person name="Huttlin E.L."/>
            <person name="Jedrychowski M.P."/>
            <person name="Elias J.E."/>
            <person name="Goswami T."/>
            <person name="Rad R."/>
            <person name="Beausoleil S.A."/>
            <person name="Villen J."/>
            <person name="Haas W."/>
            <person name="Sowa M.E."/>
            <person name="Gygi S.P."/>
        </authorList>
    </citation>
    <scope>IDENTIFICATION BY MASS SPECTROMETRY [LARGE SCALE ANALYSIS]</scope>
    <source>
        <tissue>Liver</tissue>
    </source>
</reference>
<reference key="4">
    <citation type="journal article" date="2010" name="Protein Cell">
        <title>Tyrosine aminotransferase: biochemical and structural properties and molecular dynamics simulations.</title>
        <authorList>
            <person name="Mehere P."/>
            <person name="Han Q."/>
            <person name="Lemkul J.A."/>
            <person name="Vavricka C.J."/>
            <person name="Robinson H."/>
            <person name="Bevan D.R."/>
            <person name="Li J."/>
        </authorList>
    </citation>
    <scope>X-RAY CRYSTALLOGRAPHY (2.91 ANGSTROMS) OF 41-442</scope>
    <scope>CATALYTIC ACTIVITY</scope>
    <scope>FUNCTION</scope>
    <scope>COFACTOR</scope>
    <scope>BIOPHYSICOCHEMICAL PROPERTIES</scope>
</reference>
<keyword id="KW-0002">3D-structure</keyword>
<keyword id="KW-0007">Acetylation</keyword>
<keyword id="KW-0032">Aminotransferase</keyword>
<keyword id="KW-0585">Phenylalanine catabolism</keyword>
<keyword id="KW-0597">Phosphoprotein</keyword>
<keyword id="KW-0663">Pyridoxal phosphate</keyword>
<keyword id="KW-1185">Reference proteome</keyword>
<keyword id="KW-0808">Transferase</keyword>
<keyword id="KW-0828">Tyrosine catabolism</keyword>
<organism>
    <name type="scientific">Mus musculus</name>
    <name type="common">Mouse</name>
    <dbReference type="NCBI Taxonomy" id="10090"/>
    <lineage>
        <taxon>Eukaryota</taxon>
        <taxon>Metazoa</taxon>
        <taxon>Chordata</taxon>
        <taxon>Craniata</taxon>
        <taxon>Vertebrata</taxon>
        <taxon>Euteleostomi</taxon>
        <taxon>Mammalia</taxon>
        <taxon>Eutheria</taxon>
        <taxon>Euarchontoglires</taxon>
        <taxon>Glires</taxon>
        <taxon>Rodentia</taxon>
        <taxon>Myomorpha</taxon>
        <taxon>Muroidea</taxon>
        <taxon>Muridae</taxon>
        <taxon>Murinae</taxon>
        <taxon>Mus</taxon>
        <taxon>Mus</taxon>
    </lineage>
</organism>
<dbReference type="EC" id="2.6.1.5"/>
<dbReference type="EMBL" id="AK090244">
    <property type="protein sequence ID" value="BAC41146.1"/>
    <property type="molecule type" value="mRNA"/>
</dbReference>
<dbReference type="EMBL" id="AK149383">
    <property type="protein sequence ID" value="BAE28844.1"/>
    <property type="molecule type" value="mRNA"/>
</dbReference>
<dbReference type="EMBL" id="BC023949">
    <property type="protein sequence ID" value="AAH23949.1"/>
    <property type="molecule type" value="mRNA"/>
</dbReference>
<dbReference type="EMBL" id="BC024120">
    <property type="protein sequence ID" value="AAH24120.1"/>
    <property type="molecule type" value="mRNA"/>
</dbReference>
<dbReference type="EMBL" id="BC024264">
    <property type="protein sequence ID" value="AAH24264.1"/>
    <property type="molecule type" value="mRNA"/>
</dbReference>
<dbReference type="EMBL" id="BC025934">
    <property type="protein sequence ID" value="AAH25934.1"/>
    <property type="molecule type" value="mRNA"/>
</dbReference>
<dbReference type="EMBL" id="BC028821">
    <property type="protein sequence ID" value="AAH28821.1"/>
    <property type="molecule type" value="mRNA"/>
</dbReference>
<dbReference type="EMBL" id="BC030728">
    <property type="protein sequence ID" value="AAH30728.1"/>
    <property type="molecule type" value="mRNA"/>
</dbReference>
<dbReference type="EMBL" id="BC030729">
    <property type="protein sequence ID" value="AAH30729.1"/>
    <property type="molecule type" value="mRNA"/>
</dbReference>
<dbReference type="EMBL" id="BC037526">
    <property type="protein sequence ID" value="AAH37526.1"/>
    <property type="molecule type" value="mRNA"/>
</dbReference>
<dbReference type="CCDS" id="CCDS22658.1"/>
<dbReference type="RefSeq" id="NP_666326.1">
    <property type="nucleotide sequence ID" value="NM_146214.3"/>
</dbReference>
<dbReference type="RefSeq" id="XP_030099366.1">
    <property type="nucleotide sequence ID" value="XM_030243506.1"/>
</dbReference>
<dbReference type="PDB" id="3PDX">
    <property type="method" value="X-ray"/>
    <property type="resolution" value="2.91 A"/>
    <property type="chains" value="A=41-442"/>
</dbReference>
<dbReference type="PDBsum" id="3PDX"/>
<dbReference type="SMR" id="Q8QZR1"/>
<dbReference type="FunCoup" id="Q8QZR1">
    <property type="interactions" value="705"/>
</dbReference>
<dbReference type="STRING" id="10090.ENSMUSP00000001720"/>
<dbReference type="iPTMnet" id="Q8QZR1"/>
<dbReference type="PhosphoSitePlus" id="Q8QZR1"/>
<dbReference type="SwissPalm" id="Q8QZR1"/>
<dbReference type="jPOST" id="Q8QZR1"/>
<dbReference type="PaxDb" id="10090-ENSMUSP00000001720"/>
<dbReference type="ProteomicsDB" id="273588"/>
<dbReference type="Antibodypedia" id="30099">
    <property type="antibodies" value="279 antibodies from 29 providers"/>
</dbReference>
<dbReference type="DNASU" id="234724"/>
<dbReference type="Ensembl" id="ENSMUST00000001720.14">
    <property type="protein sequence ID" value="ENSMUSP00000001720.8"/>
    <property type="gene ID" value="ENSMUSG00000001670.14"/>
</dbReference>
<dbReference type="GeneID" id="234724"/>
<dbReference type="KEGG" id="mmu:234724"/>
<dbReference type="UCSC" id="uc009njs.2">
    <property type="organism name" value="mouse"/>
</dbReference>
<dbReference type="AGR" id="MGI:98487"/>
<dbReference type="CTD" id="6898"/>
<dbReference type="MGI" id="MGI:98487">
    <property type="gene designation" value="Tat"/>
</dbReference>
<dbReference type="VEuPathDB" id="HostDB:ENSMUSG00000001670"/>
<dbReference type="eggNOG" id="KOG0259">
    <property type="taxonomic scope" value="Eukaryota"/>
</dbReference>
<dbReference type="GeneTree" id="ENSGT00940000156704"/>
<dbReference type="InParanoid" id="Q8QZR1"/>
<dbReference type="OMA" id="CALDLCI"/>
<dbReference type="OrthoDB" id="7042322at2759"/>
<dbReference type="PhylomeDB" id="Q8QZR1"/>
<dbReference type="TreeFam" id="TF105999"/>
<dbReference type="BRENDA" id="2.6.1.5">
    <property type="organism ID" value="3474"/>
</dbReference>
<dbReference type="Reactome" id="R-MMU-8963684">
    <property type="pathway name" value="Tyrosine catabolism"/>
</dbReference>
<dbReference type="UniPathway" id="UPA00139">
    <property type="reaction ID" value="UER00338"/>
</dbReference>
<dbReference type="BioGRID-ORCS" id="234724">
    <property type="hits" value="3 hits in 77 CRISPR screens"/>
</dbReference>
<dbReference type="ChiTaRS" id="Tat">
    <property type="organism name" value="mouse"/>
</dbReference>
<dbReference type="EvolutionaryTrace" id="Q8QZR1"/>
<dbReference type="PRO" id="PR:Q8QZR1"/>
<dbReference type="Proteomes" id="UP000000589">
    <property type="component" value="Chromosome 8"/>
</dbReference>
<dbReference type="RNAct" id="Q8QZR1">
    <property type="molecule type" value="protein"/>
</dbReference>
<dbReference type="Bgee" id="ENSMUSG00000001670">
    <property type="expression patterns" value="Expressed in left lobe of liver and 32 other cell types or tissues"/>
</dbReference>
<dbReference type="ExpressionAtlas" id="Q8QZR1">
    <property type="expression patterns" value="baseline and differential"/>
</dbReference>
<dbReference type="GO" id="GO:0005739">
    <property type="term" value="C:mitochondrion"/>
    <property type="evidence" value="ECO:0007005"/>
    <property type="project" value="MGI"/>
</dbReference>
<dbReference type="GO" id="GO:0016597">
    <property type="term" value="F:amino acid binding"/>
    <property type="evidence" value="ECO:0007669"/>
    <property type="project" value="Ensembl"/>
</dbReference>
<dbReference type="GO" id="GO:0042802">
    <property type="term" value="F:identical protein binding"/>
    <property type="evidence" value="ECO:0007669"/>
    <property type="project" value="Ensembl"/>
</dbReference>
<dbReference type="GO" id="GO:0004838">
    <property type="term" value="F:L-tyrosine-2-oxoglutarate transaminase activity"/>
    <property type="evidence" value="ECO:0000314"/>
    <property type="project" value="UniProtKB"/>
</dbReference>
<dbReference type="GO" id="GO:0030170">
    <property type="term" value="F:pyridoxal phosphate binding"/>
    <property type="evidence" value="ECO:0007669"/>
    <property type="project" value="InterPro"/>
</dbReference>
<dbReference type="GO" id="GO:0006103">
    <property type="term" value="P:2-oxoglutarate metabolic process"/>
    <property type="evidence" value="ECO:0000314"/>
    <property type="project" value="UniProtKB"/>
</dbReference>
<dbReference type="GO" id="GO:0009058">
    <property type="term" value="P:biosynthetic process"/>
    <property type="evidence" value="ECO:0007669"/>
    <property type="project" value="InterPro"/>
</dbReference>
<dbReference type="GO" id="GO:0006536">
    <property type="term" value="P:glutamate metabolic process"/>
    <property type="evidence" value="ECO:0000314"/>
    <property type="project" value="UniProtKB"/>
</dbReference>
<dbReference type="GO" id="GO:0006559">
    <property type="term" value="P:L-phenylalanine catabolic process"/>
    <property type="evidence" value="ECO:0007669"/>
    <property type="project" value="UniProtKB-UniPathway"/>
</dbReference>
<dbReference type="GO" id="GO:0071548">
    <property type="term" value="P:response to dexamethasone"/>
    <property type="evidence" value="ECO:0007669"/>
    <property type="project" value="Ensembl"/>
</dbReference>
<dbReference type="GO" id="GO:0046689">
    <property type="term" value="P:response to mercury ion"/>
    <property type="evidence" value="ECO:0007669"/>
    <property type="project" value="Ensembl"/>
</dbReference>
<dbReference type="GO" id="GO:0006979">
    <property type="term" value="P:response to oxidative stress"/>
    <property type="evidence" value="ECO:0007669"/>
    <property type="project" value="Ensembl"/>
</dbReference>
<dbReference type="GO" id="GO:0006572">
    <property type="term" value="P:tyrosine catabolic process"/>
    <property type="evidence" value="ECO:0000314"/>
    <property type="project" value="UniProtKB"/>
</dbReference>
<dbReference type="CDD" id="cd00609">
    <property type="entry name" value="AAT_like"/>
    <property type="match status" value="1"/>
</dbReference>
<dbReference type="FunFam" id="3.90.1150.10:FF:000040">
    <property type="entry name" value="Tyrosine aminotransferase"/>
    <property type="match status" value="1"/>
</dbReference>
<dbReference type="FunFam" id="3.40.640.10:FF:000048">
    <property type="entry name" value="tyrosine aminotransferase"/>
    <property type="match status" value="1"/>
</dbReference>
<dbReference type="Gene3D" id="3.90.1150.10">
    <property type="entry name" value="Aspartate Aminotransferase, domain 1"/>
    <property type="match status" value="1"/>
</dbReference>
<dbReference type="Gene3D" id="3.40.640.10">
    <property type="entry name" value="Type I PLP-dependent aspartate aminotransferase-like (Major domain)"/>
    <property type="match status" value="1"/>
</dbReference>
<dbReference type="InterPro" id="IPR004839">
    <property type="entry name" value="Aminotransferase_I/II_large"/>
</dbReference>
<dbReference type="InterPro" id="IPR004838">
    <property type="entry name" value="NHTrfase_class1_PyrdxlP-BS"/>
</dbReference>
<dbReference type="InterPro" id="IPR015424">
    <property type="entry name" value="PyrdxlP-dep_Trfase"/>
</dbReference>
<dbReference type="InterPro" id="IPR015421">
    <property type="entry name" value="PyrdxlP-dep_Trfase_major"/>
</dbReference>
<dbReference type="InterPro" id="IPR015422">
    <property type="entry name" value="PyrdxlP-dep_Trfase_small"/>
</dbReference>
<dbReference type="InterPro" id="IPR011715">
    <property type="entry name" value="Tyr_aminoTrfase_ubiquitination"/>
</dbReference>
<dbReference type="InterPro" id="IPR005958">
    <property type="entry name" value="TyrNic_aminoTrfase"/>
</dbReference>
<dbReference type="InterPro" id="IPR005957">
    <property type="entry name" value="Tyrosine_aminoTrfase"/>
</dbReference>
<dbReference type="NCBIfam" id="TIGR01264">
    <property type="entry name" value="tyr_amTase_E"/>
    <property type="match status" value="1"/>
</dbReference>
<dbReference type="NCBIfam" id="TIGR01265">
    <property type="entry name" value="tyr_nico_aTase"/>
    <property type="match status" value="1"/>
</dbReference>
<dbReference type="PANTHER" id="PTHR45744">
    <property type="entry name" value="TYROSINE AMINOTRANSFERASE"/>
    <property type="match status" value="1"/>
</dbReference>
<dbReference type="PANTHER" id="PTHR45744:SF2">
    <property type="entry name" value="TYROSINE AMINOTRANSFERASE"/>
    <property type="match status" value="1"/>
</dbReference>
<dbReference type="Pfam" id="PF00155">
    <property type="entry name" value="Aminotran_1_2"/>
    <property type="match status" value="1"/>
</dbReference>
<dbReference type="Pfam" id="PF07706">
    <property type="entry name" value="TAT_ubiq"/>
    <property type="match status" value="1"/>
</dbReference>
<dbReference type="PIRSF" id="PIRSF000517">
    <property type="entry name" value="Tyr_transaminase"/>
    <property type="match status" value="1"/>
</dbReference>
<dbReference type="SUPFAM" id="SSF53383">
    <property type="entry name" value="PLP-dependent transferases"/>
    <property type="match status" value="1"/>
</dbReference>
<dbReference type="PROSITE" id="PS00105">
    <property type="entry name" value="AA_TRANSFER_CLASS_1"/>
    <property type="match status" value="1"/>
</dbReference>
<protein>
    <recommendedName>
        <fullName>Tyrosine aminotransferase</fullName>
        <shortName>TAT</shortName>
        <ecNumber>2.6.1.5</ecNumber>
    </recommendedName>
    <alternativeName>
        <fullName>L-tyrosine:2-oxoglutarate aminotransferase</fullName>
    </alternativeName>
</protein>
<gene>
    <name type="primary">Tat</name>
</gene>
<proteinExistence type="evidence at protein level"/>
<feature type="chain" id="PRO_0000123888" description="Tyrosine aminotransferase">
    <location>
        <begin position="1"/>
        <end position="454"/>
    </location>
</feature>
<feature type="modified residue" description="N-acetylmethionine" evidence="2">
    <location>
        <position position="1"/>
    </location>
</feature>
<feature type="modified residue" description="N6-(pyridoxal phosphate)lysine">
    <location>
        <position position="280"/>
    </location>
</feature>
<feature type="modified residue" description="Phosphoserine" evidence="3">
    <location>
        <position position="448"/>
    </location>
</feature>
<feature type="sequence conflict" description="In Ref. 1; BAC41146." evidence="5" ref="1">
    <original>L</original>
    <variation>W</variation>
    <location>
        <position position="234"/>
    </location>
</feature>
<feature type="sequence conflict" description="In Ref. 1; BAC41146." evidence="5" ref="1">
    <original>G</original>
    <variation>V</variation>
    <location>
        <position position="362"/>
    </location>
</feature>
<feature type="sequence conflict" description="In Ref. 1; BAC41146." evidence="5" ref="1">
    <original>I</original>
    <variation>M</variation>
    <location>
        <position position="378"/>
    </location>
</feature>
<feature type="strand" evidence="6">
    <location>
        <begin position="83"/>
        <end position="87"/>
    </location>
</feature>
<feature type="helix" evidence="6">
    <location>
        <begin position="91"/>
        <end position="102"/>
    </location>
</feature>
<feature type="strand" evidence="6">
    <location>
        <begin position="106"/>
        <end position="108"/>
    </location>
</feature>
<feature type="helix" evidence="6">
    <location>
        <begin position="116"/>
        <end position="125"/>
    </location>
</feature>
<feature type="strand" evidence="6">
    <location>
        <begin position="129"/>
        <end position="131"/>
    </location>
</feature>
<feature type="helix" evidence="6">
    <location>
        <begin position="135"/>
        <end position="137"/>
    </location>
</feature>
<feature type="strand" evidence="6">
    <location>
        <begin position="138"/>
        <end position="143"/>
    </location>
</feature>
<feature type="helix" evidence="6">
    <location>
        <begin position="144"/>
        <end position="153"/>
    </location>
</feature>
<feature type="strand" evidence="6">
    <location>
        <begin position="161"/>
        <end position="164"/>
    </location>
</feature>
<feature type="helix" evidence="6">
    <location>
        <begin position="170"/>
        <end position="179"/>
    </location>
</feature>
<feature type="strand" evidence="6">
    <location>
        <begin position="182"/>
        <end position="185"/>
    </location>
</feature>
<feature type="turn" evidence="6">
    <location>
        <begin position="190"/>
        <end position="194"/>
    </location>
</feature>
<feature type="helix" evidence="6">
    <location>
        <begin position="198"/>
        <end position="202"/>
    </location>
</feature>
<feature type="strand" evidence="6">
    <location>
        <begin position="207"/>
        <end position="217"/>
    </location>
</feature>
<feature type="turn" evidence="6">
    <location>
        <begin position="219"/>
        <end position="221"/>
    </location>
</feature>
<feature type="helix" evidence="6">
    <location>
        <begin position="227"/>
        <end position="237"/>
    </location>
</feature>
<feature type="turn" evidence="6">
    <location>
        <begin position="238"/>
        <end position="241"/>
    </location>
</feature>
<feature type="strand" evidence="6">
    <location>
        <begin position="244"/>
        <end position="247"/>
    </location>
</feature>
<feature type="turn" evidence="6">
    <location>
        <begin position="249"/>
        <end position="252"/>
    </location>
</feature>
<feature type="strand" evidence="6">
    <location>
        <begin position="256"/>
        <end position="258"/>
    </location>
</feature>
<feature type="helix" evidence="6">
    <location>
        <begin position="263"/>
        <end position="266"/>
    </location>
</feature>
<feature type="strand" evidence="6">
    <location>
        <begin position="272"/>
        <end position="274"/>
    </location>
</feature>
<feature type="helix" evidence="6">
    <location>
        <begin position="285"/>
        <end position="287"/>
    </location>
</feature>
<feature type="strand" evidence="6">
    <location>
        <begin position="290"/>
        <end position="295"/>
    </location>
</feature>
<feature type="strand" evidence="6">
    <location>
        <begin position="297"/>
        <end position="301"/>
    </location>
</feature>
<feature type="helix" evidence="6">
    <location>
        <begin position="302"/>
        <end position="313"/>
    </location>
</feature>
<feature type="turn" evidence="6">
    <location>
        <begin position="314"/>
        <end position="316"/>
    </location>
</feature>
<feature type="helix" evidence="6">
    <location>
        <begin position="321"/>
        <end position="333"/>
    </location>
</feature>
<feature type="helix" evidence="6">
    <location>
        <begin position="336"/>
        <end position="359"/>
    </location>
</feature>
<feature type="strand" evidence="6">
    <location>
        <begin position="373"/>
        <end position="378"/>
    </location>
</feature>
<feature type="helix" evidence="6">
    <location>
        <begin position="389"/>
        <end position="400"/>
    </location>
</feature>
<feature type="helix" evidence="6">
    <location>
        <begin position="407"/>
        <end position="410"/>
    </location>
</feature>
<feature type="strand" evidence="6">
    <location>
        <begin position="414"/>
        <end position="420"/>
    </location>
</feature>
<feature type="helix" evidence="6">
    <location>
        <begin position="424"/>
        <end position="438"/>
    </location>
</feature>
<feature type="turn" evidence="6">
    <location>
        <begin position="439"/>
        <end position="441"/>
    </location>
</feature>
<sequence>MDSYVIQTNVNDSLPSVLDVRVNIGGRSSVQGRAKGRKARWNVRPSDMSNKTFNPIRAIVDNMKVKPNPNKTVISLSIGDPTVFGNLPTDPEVTQAMKDALDSGKYNGYAPSIGYLSSREEVASYYHCPEAPLEAKDVILTSGCSQAIELCLAVLANPGQNILIPRPGFSLYRTLAESMGIEVKLYNLLPEKSWEIDLKQLESLIDEKTACLVVNNPSNPCGSVFSKRHLQKILAVAERQCVPILADEIYGDMVFSDCKYEPMATLSTNVPILSCGGLAKRWLVPGWRLGWILIHDRRDIFGNEIRDGLVKLSQRILGPCTIVQGALKSILQRTPQEFYQDTLSFLKSNADLCYGALSAIPGLQPVRPSGAMYLMVGIEMEHFPEFENDVEFTERLIAEQSVHCLPATCFEYPNFFRVVITVPEVMMLEACSRIQEFCEQHYHCAEGSQEECDK</sequence>